<protein>
    <recommendedName>
        <fullName evidence="4">Mitogen-activated protein kinase kinase 5</fullName>
        <ecNumber evidence="3">2.7.12.2</ecNumber>
    </recommendedName>
    <alternativeName>
        <fullName evidence="4">LmxMKK5</fullName>
    </alternativeName>
</protein>
<sequence>MSRLKINLDAIERDGASATEGFCADGVRIGSLLVSSEGVRDNQGNLCVLSLSDLEVVPETEGGFLGKGSSGSVRRAVHRGSNKVVALKEIKVTGQTHINEIRRELETLHAGDFATPYLVSFYGAFAHEGSVFIAMEAMDGSLHELYKPVPPPVLACITRLMLKGLTYLHRNRHLIHRDLKPSNVLYNSRTGDIKISDFGVSSNLECTKADAHSFVGTVTYMSPERLRGEHYSYGADIWSLGLVVAELAVGVCPYAGLRGGSSEARFWALLQHLNGDGTALELPPEMDSDLADFISACVVKSPDRRPTCTELLRHPFIVRYTGAAPEAEAKPFSTTTPTVLAPGGLSSLLNRASPAAGSALPLASEGGTPKATSPSPAPVSPLTLSCPLERHDGETDADIADRTVVARWIHAVMKRAVLHKARGHGREELHQEPLAAVSASVATDSGEGGGAAGVSAASLDNGQAAQHREFRAERNLDGHSGDGGSAPVEEDCTAGVRSLTCDDLRWTSTGEPSVNLDDELNRLLF</sequence>
<reference evidence="7" key="1">
    <citation type="journal article" date="2010" name="Int. J. Parasitol.">
        <title>LmxMPK4, an essential mitogen-activated protein kinase of Leishmania mexicana is phosphorylated and activated by the STE7-like protein kinase LmxMKK5.</title>
        <authorList>
            <person name="von Freyend S.J."/>
            <person name="Rosenqvist H."/>
            <person name="Fink A."/>
            <person name="Melzer I.M."/>
            <person name="Clos J."/>
            <person name="Jensen O.N."/>
            <person name="Wiese M."/>
        </authorList>
    </citation>
    <scope>NUCLEOTIDE SEQUENCE [GENOMIC DNA]</scope>
    <scope>FUNCTION</scope>
    <scope>CATALYTIC ACTIVITY</scope>
    <scope>COFACTOR</scope>
    <source>
        <strain evidence="7">MNYC/BZ/62/M379</strain>
    </source>
</reference>
<evidence type="ECO:0000255" key="1">
    <source>
        <dbReference type="PROSITE-ProRule" id="PRU00159"/>
    </source>
</evidence>
<evidence type="ECO:0000256" key="2">
    <source>
        <dbReference type="SAM" id="MobiDB-lite"/>
    </source>
</evidence>
<evidence type="ECO:0000269" key="3">
    <source>
    </source>
</evidence>
<evidence type="ECO:0000303" key="4">
    <source>
    </source>
</evidence>
<evidence type="ECO:0000305" key="5"/>
<evidence type="ECO:0000305" key="6">
    <source>
    </source>
</evidence>
<evidence type="ECO:0000312" key="7">
    <source>
        <dbReference type="EMBL" id="ABG91277.1"/>
    </source>
</evidence>
<keyword id="KW-0067">ATP-binding</keyword>
<keyword id="KW-0418">Kinase</keyword>
<keyword id="KW-0460">Magnesium</keyword>
<keyword id="KW-0479">Metal-binding</keyword>
<keyword id="KW-0547">Nucleotide-binding</keyword>
<keyword id="KW-0723">Serine/threonine-protein kinase</keyword>
<keyword id="KW-0808">Transferase</keyword>
<keyword id="KW-0829">Tyrosine-protein kinase</keyword>
<gene>
    <name evidence="4" type="primary">MKK5</name>
</gene>
<feature type="chain" id="PRO_0000449292" description="Mitogen-activated protein kinase kinase 5">
    <location>
        <begin position="1"/>
        <end position="525"/>
    </location>
</feature>
<feature type="domain" description="Protein kinase" evidence="1">
    <location>
        <begin position="59"/>
        <end position="317"/>
    </location>
</feature>
<feature type="region of interest" description="Disordered" evidence="2">
    <location>
        <begin position="358"/>
        <end position="392"/>
    </location>
</feature>
<feature type="region of interest" description="Disordered" evidence="2">
    <location>
        <begin position="438"/>
        <end position="468"/>
    </location>
</feature>
<feature type="compositionally biased region" description="Low complexity" evidence="2">
    <location>
        <begin position="358"/>
        <end position="367"/>
    </location>
</feature>
<feature type="active site" description="Proton acceptor" evidence="1">
    <location>
        <position position="178"/>
    </location>
</feature>
<feature type="binding site" evidence="1">
    <location>
        <begin position="65"/>
        <end position="73"/>
    </location>
    <ligand>
        <name>ATP</name>
        <dbReference type="ChEBI" id="CHEBI:30616"/>
    </ligand>
</feature>
<feature type="binding site" evidence="1">
    <location>
        <position position="88"/>
    </location>
    <ligand>
        <name>ATP</name>
        <dbReference type="ChEBI" id="CHEBI:30616"/>
    </ligand>
</feature>
<proteinExistence type="evidence at protein level"/>
<accession>Q0PKV7</accession>
<name>MKK5_LEIME</name>
<comment type="function">
    <text evidence="3">Protein kinase which phosphorylates and activates MPK4 in vitro.</text>
</comment>
<comment type="catalytic activity">
    <reaction evidence="3">
        <text>L-tyrosyl-[protein] + ATP = O-phospho-L-tyrosyl-[protein] + ADP + H(+)</text>
        <dbReference type="Rhea" id="RHEA:10596"/>
        <dbReference type="Rhea" id="RHEA-COMP:10136"/>
        <dbReference type="Rhea" id="RHEA-COMP:20101"/>
        <dbReference type="ChEBI" id="CHEBI:15378"/>
        <dbReference type="ChEBI" id="CHEBI:30616"/>
        <dbReference type="ChEBI" id="CHEBI:46858"/>
        <dbReference type="ChEBI" id="CHEBI:61978"/>
        <dbReference type="ChEBI" id="CHEBI:456216"/>
        <dbReference type="EC" id="2.7.12.2"/>
    </reaction>
</comment>
<comment type="catalytic activity">
    <reaction evidence="6">
        <text>L-seryl-[protein] + ATP = O-phospho-L-seryl-[protein] + ADP + H(+)</text>
        <dbReference type="Rhea" id="RHEA:17989"/>
        <dbReference type="Rhea" id="RHEA-COMP:9863"/>
        <dbReference type="Rhea" id="RHEA-COMP:11604"/>
        <dbReference type="ChEBI" id="CHEBI:15378"/>
        <dbReference type="ChEBI" id="CHEBI:29999"/>
        <dbReference type="ChEBI" id="CHEBI:30616"/>
        <dbReference type="ChEBI" id="CHEBI:83421"/>
        <dbReference type="ChEBI" id="CHEBI:456216"/>
        <dbReference type="EC" id="2.7.12.2"/>
    </reaction>
</comment>
<comment type="catalytic activity">
    <reaction evidence="3">
        <text>L-threonyl-[protein] + ATP = O-phospho-L-threonyl-[protein] + ADP + H(+)</text>
        <dbReference type="Rhea" id="RHEA:46608"/>
        <dbReference type="Rhea" id="RHEA-COMP:11060"/>
        <dbReference type="Rhea" id="RHEA-COMP:11605"/>
        <dbReference type="ChEBI" id="CHEBI:15378"/>
        <dbReference type="ChEBI" id="CHEBI:30013"/>
        <dbReference type="ChEBI" id="CHEBI:30616"/>
        <dbReference type="ChEBI" id="CHEBI:61977"/>
        <dbReference type="ChEBI" id="CHEBI:456216"/>
        <dbReference type="EC" id="2.7.12.2"/>
    </reaction>
</comment>
<comment type="cofactor">
    <cofactor evidence="6">
        <name>Mg(2+)</name>
        <dbReference type="ChEBI" id="CHEBI:18420"/>
    </cofactor>
    <text evidence="6">Mn(2+) was used in the in vitro kinase assay but Mg(2+) is likely to be the in vivo cofactor.</text>
</comment>
<comment type="similarity">
    <text evidence="5">Belongs to the protein kinase superfamily. STE Ser/Thr protein kinase family. MAP kinase kinase subfamily.</text>
</comment>
<organism evidence="7">
    <name type="scientific">Leishmania mexicana</name>
    <dbReference type="NCBI Taxonomy" id="5665"/>
    <lineage>
        <taxon>Eukaryota</taxon>
        <taxon>Discoba</taxon>
        <taxon>Euglenozoa</taxon>
        <taxon>Kinetoplastea</taxon>
        <taxon>Metakinetoplastina</taxon>
        <taxon>Trypanosomatida</taxon>
        <taxon>Trypanosomatidae</taxon>
        <taxon>Leishmaniinae</taxon>
        <taxon>Leishmania</taxon>
    </lineage>
</organism>
<dbReference type="EC" id="2.7.12.2" evidence="3"/>
<dbReference type="EMBL" id="DQ812908">
    <property type="protein sequence ID" value="ABG91277.1"/>
    <property type="molecule type" value="Genomic_DNA"/>
</dbReference>
<dbReference type="SMR" id="Q0PKV7"/>
<dbReference type="VEuPathDB" id="TriTrypDB:LmxM.36.0860"/>
<dbReference type="OMA" id="YGAFAHE"/>
<dbReference type="GO" id="GO:0005524">
    <property type="term" value="F:ATP binding"/>
    <property type="evidence" value="ECO:0007669"/>
    <property type="project" value="UniProtKB-KW"/>
</dbReference>
<dbReference type="GO" id="GO:0004708">
    <property type="term" value="F:MAP kinase kinase activity"/>
    <property type="evidence" value="ECO:0000314"/>
    <property type="project" value="UniProtKB"/>
</dbReference>
<dbReference type="GO" id="GO:0046872">
    <property type="term" value="F:metal ion binding"/>
    <property type="evidence" value="ECO:0007669"/>
    <property type="project" value="UniProtKB-KW"/>
</dbReference>
<dbReference type="GO" id="GO:0106310">
    <property type="term" value="F:protein serine kinase activity"/>
    <property type="evidence" value="ECO:0007669"/>
    <property type="project" value="RHEA"/>
</dbReference>
<dbReference type="GO" id="GO:0043539">
    <property type="term" value="F:protein serine/threonine kinase activator activity"/>
    <property type="evidence" value="ECO:0000314"/>
    <property type="project" value="UniProtKB"/>
</dbReference>
<dbReference type="GO" id="GO:0004674">
    <property type="term" value="F:protein serine/threonine kinase activity"/>
    <property type="evidence" value="ECO:0007669"/>
    <property type="project" value="UniProtKB-KW"/>
</dbReference>
<dbReference type="GO" id="GO:0004713">
    <property type="term" value="F:protein tyrosine kinase activity"/>
    <property type="evidence" value="ECO:0007669"/>
    <property type="project" value="UniProtKB-KW"/>
</dbReference>
<dbReference type="GO" id="GO:0000165">
    <property type="term" value="P:MAPK cascade"/>
    <property type="evidence" value="ECO:0000314"/>
    <property type="project" value="UniProtKB"/>
</dbReference>
<dbReference type="CDD" id="cd06623">
    <property type="entry name" value="PKc_MAPKK_plant_like"/>
    <property type="match status" value="1"/>
</dbReference>
<dbReference type="FunFam" id="3.30.200.20:FF:000640">
    <property type="entry name" value="Protein kinase, putative"/>
    <property type="match status" value="1"/>
</dbReference>
<dbReference type="FunFam" id="1.10.510.10:FF:000744">
    <property type="entry name" value="Putative mitogen activated protein kinase"/>
    <property type="match status" value="1"/>
</dbReference>
<dbReference type="Gene3D" id="3.30.200.20">
    <property type="entry name" value="Phosphorylase Kinase, domain 1"/>
    <property type="match status" value="1"/>
</dbReference>
<dbReference type="Gene3D" id="1.10.510.10">
    <property type="entry name" value="Transferase(Phosphotransferase) domain 1"/>
    <property type="match status" value="1"/>
</dbReference>
<dbReference type="InterPro" id="IPR011009">
    <property type="entry name" value="Kinase-like_dom_sf"/>
</dbReference>
<dbReference type="InterPro" id="IPR000719">
    <property type="entry name" value="Prot_kinase_dom"/>
</dbReference>
<dbReference type="InterPro" id="IPR017441">
    <property type="entry name" value="Protein_kinase_ATP_BS"/>
</dbReference>
<dbReference type="InterPro" id="IPR008271">
    <property type="entry name" value="Ser/Thr_kinase_AS"/>
</dbReference>
<dbReference type="PANTHER" id="PTHR48013:SF9">
    <property type="entry name" value="DUAL SPECIFICITY MITOGEN-ACTIVATED PROTEIN KINASE KINASE 5"/>
    <property type="match status" value="1"/>
</dbReference>
<dbReference type="PANTHER" id="PTHR48013">
    <property type="entry name" value="DUAL SPECIFICITY MITOGEN-ACTIVATED PROTEIN KINASE KINASE 5-RELATED"/>
    <property type="match status" value="1"/>
</dbReference>
<dbReference type="Pfam" id="PF00069">
    <property type="entry name" value="Pkinase"/>
    <property type="match status" value="1"/>
</dbReference>
<dbReference type="SMART" id="SM00220">
    <property type="entry name" value="S_TKc"/>
    <property type="match status" value="1"/>
</dbReference>
<dbReference type="SUPFAM" id="SSF56112">
    <property type="entry name" value="Protein kinase-like (PK-like)"/>
    <property type="match status" value="1"/>
</dbReference>
<dbReference type="PROSITE" id="PS00107">
    <property type="entry name" value="PROTEIN_KINASE_ATP"/>
    <property type="match status" value="1"/>
</dbReference>
<dbReference type="PROSITE" id="PS50011">
    <property type="entry name" value="PROTEIN_KINASE_DOM"/>
    <property type="match status" value="1"/>
</dbReference>
<dbReference type="PROSITE" id="PS00108">
    <property type="entry name" value="PROTEIN_KINASE_ST"/>
    <property type="match status" value="1"/>
</dbReference>